<comment type="function">
    <text evidence="2 7 9">Component of the SMC5-SMC6 complex, a complex involved in repair of DNA double-strand breaks by homologous recombination (PubMed:20864041, PubMed:27427983). The complex may promote sister chromatid homologous recombination by recruiting the SMC1-SMC3 cohesin complex to double-strand breaks. The complex is required for telomere maintenance via recombination in ALT (alternative lengthening of telomeres) cell lines and mediates sumoylation of shelterin complex (telosome) components which is proposed to lead to shelterin complex disassembly in ALT-associated PML bodies (APBs). In vitro enhances ubiquitin ligase activity of NSMCE1. Proposed to act through recruitment and/or stabilization of the Ubl-conjugating enzyme (E2) at the E3:substrate complex (PubMed:20864041). May be a growth suppressor that facilitates the entry of the cell into cell cycle arrest (By similarity).</text>
</comment>
<comment type="subunit">
    <text evidence="2 6 7 8 9">Component of the SMC5-SMC6 complex which consists at least of SMC5, SMC6, NSMCE2, NSMCE1, NSMCE4A or EID3 and NSMCE3. NSMCE1, NSMCE4A or EID3 and NSMCE3 probably form a subcomplex that bridges the head domains of the SMC5:SMC6 heterodimer (PubMed:18086888). Interacts with PJA1 (PubMed:20864041). Interacts with E2F1 (via C-terminus) (By similarity). Interacts with NGFR (via C-terminus) (By similarity). Interacts with NSMCE1 (PubMed:18086888, PubMed:20864041, PubMed:21364888, PubMed:27427983). Interacts with NSMCE4 (PubMed:20864041, PubMed:27427983). Interacts with SMC6 (PubMed:18086888). Interacts with EID3 (PubMed:21364888).</text>
</comment>
<comment type="interaction">
    <interactant intactId="EBI-2557356">
        <id>Q96MG7</id>
    </interactant>
    <interactant intactId="EBI-744483">
        <id>Q8N140</id>
        <label>EID3</label>
    </interactant>
    <organismsDiffer>false</organismsDiffer>
    <experiments>10</experiments>
</comment>
<comment type="interaction">
    <interactant intactId="EBI-2557356">
        <id>Q96MG7</id>
    </interactant>
    <interactant intactId="EBI-2557372">
        <id>Q8WV22</id>
        <label>NSMCE1</label>
    </interactant>
    <organismsDiffer>false</organismsDiffer>
    <experiments>22</experiments>
</comment>
<comment type="interaction">
    <interactant intactId="EBI-2557356">
        <id>Q96MG7</id>
    </interactant>
    <interactant intactId="EBI-2557393">
        <id>Q9NXX6</id>
        <label>NSMCE4A</label>
    </interactant>
    <organismsDiffer>false</organismsDiffer>
    <experiments>6</experiments>
</comment>
<comment type="interaction">
    <interactant intactId="EBI-2557356">
        <id>Q96MG7</id>
    </interactant>
    <interactant intactId="EBI-714606">
        <id>Q8NG27</id>
        <label>PJA1</label>
    </interactant>
    <organismsDiffer>false</organismsDiffer>
    <experiments>4</experiments>
</comment>
<comment type="interaction">
    <interactant intactId="EBI-2557356">
        <id>Q96MG7</id>
    </interactant>
    <interactant intactId="EBI-605415">
        <id>Q96SB8</id>
        <label>SMC6</label>
    </interactant>
    <organismsDiffer>false</organismsDiffer>
    <experiments>7</experiments>
</comment>
<comment type="subcellular location">
    <subcellularLocation>
        <location evidence="1">Cytoplasm</location>
    </subcellularLocation>
    <subcellularLocation>
        <location evidence="6">Nucleus</location>
    </subcellularLocation>
    <subcellularLocation>
        <location evidence="11">Chromosome</location>
        <location evidence="11">Telomere</location>
    </subcellularLocation>
</comment>
<comment type="tissue specificity">
    <text evidence="5">Ubiquitous.</text>
</comment>
<comment type="disease" evidence="9">
    <disease id="DI-04908">
        <name>Lung disease, immunodeficiency, and chromosome breakage syndrome</name>
        <acronym>LICS</acronym>
        <description>An autosomal recessive chromosome breakage syndrome associated with severe, fatal lung disease in early childhood, following viral pneumonia. LICS is characterized by combined T and B-cell immunodeficiency. Some patients may have mild dysmorphic features.</description>
        <dbReference type="MIM" id="617241"/>
    </disease>
    <text>The disease is caused by variants affecting the gene represented in this entry.</text>
</comment>
<comment type="sequence caution" evidence="10">
    <conflict type="frameshift">
        <sequence resource="EMBL-CDS" id="BAB84964"/>
    </conflict>
</comment>
<evidence type="ECO:0000250" key="1"/>
<evidence type="ECO:0000250" key="2">
    <source>
        <dbReference type="UniProtKB" id="Q9CPR8"/>
    </source>
</evidence>
<evidence type="ECO:0000255" key="3">
    <source>
        <dbReference type="PROSITE-ProRule" id="PRU00127"/>
    </source>
</evidence>
<evidence type="ECO:0000256" key="4">
    <source>
        <dbReference type="SAM" id="MobiDB-lite"/>
    </source>
</evidence>
<evidence type="ECO:0000269" key="5">
    <source>
    </source>
</evidence>
<evidence type="ECO:0000269" key="6">
    <source>
    </source>
</evidence>
<evidence type="ECO:0000269" key="7">
    <source>
    </source>
</evidence>
<evidence type="ECO:0000269" key="8">
    <source>
    </source>
</evidence>
<evidence type="ECO:0000269" key="9">
    <source>
    </source>
</evidence>
<evidence type="ECO:0000305" key="10"/>
<evidence type="ECO:0000305" key="11">
    <source>
    </source>
</evidence>
<evidence type="ECO:0000312" key="12">
    <source>
        <dbReference type="HGNC" id="HGNC:7677"/>
    </source>
</evidence>
<evidence type="ECO:0007744" key="13">
    <source>
    </source>
</evidence>
<evidence type="ECO:0007744" key="14">
    <source>
    </source>
</evidence>
<evidence type="ECO:0007744" key="15">
    <source>
    </source>
</evidence>
<evidence type="ECO:0007829" key="16">
    <source>
        <dbReference type="PDB" id="5HVQ"/>
    </source>
</evidence>
<evidence type="ECO:0007829" key="17">
    <source>
        <dbReference type="PDB" id="5WY5"/>
    </source>
</evidence>
<accession>Q96MG7</accession>
<accession>Q8IW16</accession>
<accession>Q8TEI6</accession>
<accession>Q9H214</accession>
<protein>
    <recommendedName>
        <fullName>Non-structural maintenance of chromosomes element 3 homolog</fullName>
        <shortName>Non-SMC element 3 homolog</shortName>
    </recommendedName>
    <alternativeName>
        <fullName>Hepatocellular carcinoma-associated protein 4</fullName>
    </alternativeName>
    <alternativeName>
        <fullName>MAGE-G1 antigen</fullName>
    </alternativeName>
    <alternativeName>
        <fullName>Melanoma-associated antigen G1</fullName>
    </alternativeName>
    <alternativeName>
        <fullName>Necdin-like protein 2</fullName>
    </alternativeName>
</protein>
<name>NSE3_HUMAN</name>
<keyword id="KW-0002">3D-structure</keyword>
<keyword id="KW-0158">Chromosome</keyword>
<keyword id="KW-0963">Cytoplasm</keyword>
<keyword id="KW-0225">Disease variant</keyword>
<keyword id="KW-0227">DNA damage</keyword>
<keyword id="KW-0233">DNA recombination</keyword>
<keyword id="KW-0234">DNA repair</keyword>
<keyword id="KW-0341">Growth regulation</keyword>
<keyword id="KW-0539">Nucleus</keyword>
<keyword id="KW-0597">Phosphoprotein</keyword>
<keyword id="KW-1267">Proteomics identification</keyword>
<keyword id="KW-1185">Reference proteome</keyword>
<keyword id="KW-0779">Telomere</keyword>
<keyword id="KW-0825">Tumor antigen</keyword>
<keyword id="KW-0833">Ubl conjugation pathway</keyword>
<dbReference type="EMBL" id="AF490510">
    <property type="protein sequence ID" value="AAM08357.1"/>
    <property type="molecule type" value="mRNA"/>
</dbReference>
<dbReference type="EMBL" id="AK056957">
    <property type="protein sequence ID" value="BAB71325.1"/>
    <property type="molecule type" value="mRNA"/>
</dbReference>
<dbReference type="EMBL" id="BC041166">
    <property type="protein sequence ID" value="AAH41166.2"/>
    <property type="molecule type" value="mRNA"/>
</dbReference>
<dbReference type="EMBL" id="BC053999">
    <property type="protein sequence ID" value="AAH53999.1"/>
    <property type="molecule type" value="mRNA"/>
</dbReference>
<dbReference type="EMBL" id="AK074138">
    <property type="protein sequence ID" value="BAB84964.1"/>
    <property type="status" value="ALT_FRAME"/>
    <property type="molecule type" value="mRNA"/>
</dbReference>
<dbReference type="EMBL" id="AF320911">
    <property type="protein sequence ID" value="AAG38607.1"/>
    <property type="molecule type" value="Genomic_DNA"/>
</dbReference>
<dbReference type="CCDS" id="CCDS10023.1"/>
<dbReference type="RefSeq" id="NP_619649.1">
    <property type="nucleotide sequence ID" value="NM_138704.4"/>
</dbReference>
<dbReference type="PDB" id="5HVQ">
    <property type="method" value="X-ray"/>
    <property type="resolution" value="2.92 A"/>
    <property type="chains" value="D=78-294"/>
</dbReference>
<dbReference type="PDB" id="5WY5">
    <property type="method" value="X-ray"/>
    <property type="resolution" value="2.92 A"/>
    <property type="chains" value="B=78-294"/>
</dbReference>
<dbReference type="PDBsum" id="5HVQ"/>
<dbReference type="PDBsum" id="5WY5"/>
<dbReference type="SMR" id="Q96MG7"/>
<dbReference type="BioGRID" id="121094">
    <property type="interactions" value="47"/>
</dbReference>
<dbReference type="ComplexPortal" id="CPX-5992">
    <property type="entry name" value="SMC5-SMC6 SUMO ligase complex, EID3 variant"/>
</dbReference>
<dbReference type="ComplexPortal" id="CPX-6086">
    <property type="entry name" value="SMC5-SMC6 SUMO ligase complex, NSE4EA variant"/>
</dbReference>
<dbReference type="CORUM" id="Q96MG7"/>
<dbReference type="FunCoup" id="Q96MG7">
    <property type="interactions" value="1774"/>
</dbReference>
<dbReference type="IntAct" id="Q96MG7">
    <property type="interactions" value="25"/>
</dbReference>
<dbReference type="STRING" id="9606.ENSP00000330694"/>
<dbReference type="iPTMnet" id="Q96MG7"/>
<dbReference type="PhosphoSitePlus" id="Q96MG7"/>
<dbReference type="BioMuta" id="NSMCE3"/>
<dbReference type="DMDM" id="46396494"/>
<dbReference type="jPOST" id="Q96MG7"/>
<dbReference type="MassIVE" id="Q96MG7"/>
<dbReference type="PaxDb" id="9606-ENSP00000330694"/>
<dbReference type="PeptideAtlas" id="Q96MG7"/>
<dbReference type="ProteomicsDB" id="77353"/>
<dbReference type="Pumba" id="Q96MG7"/>
<dbReference type="Antibodypedia" id="41882">
    <property type="antibodies" value="52 antibodies from 19 providers"/>
</dbReference>
<dbReference type="DNASU" id="56160"/>
<dbReference type="Ensembl" id="ENST00000332303.6">
    <property type="protein sequence ID" value="ENSP00000330694.4"/>
    <property type="gene ID" value="ENSG00000185115.6"/>
</dbReference>
<dbReference type="Ensembl" id="ENST00000631973.1">
    <property type="protein sequence ID" value="ENSP00000487893.1"/>
    <property type="gene ID" value="ENSG00000282130.1"/>
</dbReference>
<dbReference type="GeneID" id="56160"/>
<dbReference type="KEGG" id="hsa:56160"/>
<dbReference type="MANE-Select" id="ENST00000332303.6">
    <property type="protein sequence ID" value="ENSP00000330694.4"/>
    <property type="RefSeq nucleotide sequence ID" value="NM_138704.4"/>
    <property type="RefSeq protein sequence ID" value="NP_619649.1"/>
</dbReference>
<dbReference type="UCSC" id="uc001zco.4">
    <property type="organism name" value="human"/>
</dbReference>
<dbReference type="AGR" id="HGNC:7677"/>
<dbReference type="CTD" id="56160"/>
<dbReference type="DisGeNET" id="56160"/>
<dbReference type="GeneCards" id="NSMCE3"/>
<dbReference type="HGNC" id="HGNC:7677">
    <property type="gene designation" value="NSMCE3"/>
</dbReference>
<dbReference type="HPA" id="ENSG00000185115">
    <property type="expression patterns" value="Low tissue specificity"/>
</dbReference>
<dbReference type="MalaCards" id="NSMCE3"/>
<dbReference type="MIM" id="608243">
    <property type="type" value="gene"/>
</dbReference>
<dbReference type="MIM" id="617241">
    <property type="type" value="phenotype"/>
</dbReference>
<dbReference type="neXtProt" id="NX_Q96MG7"/>
<dbReference type="OpenTargets" id="ENSG00000185115"/>
<dbReference type="PharmGKB" id="PA31480"/>
<dbReference type="VEuPathDB" id="HostDB:ENSG00000185115"/>
<dbReference type="eggNOG" id="KOG4562">
    <property type="taxonomic scope" value="Eukaryota"/>
</dbReference>
<dbReference type="GeneTree" id="ENSGT00940000163627"/>
<dbReference type="HOGENOM" id="CLU_039582_2_0_1"/>
<dbReference type="InParanoid" id="Q96MG7"/>
<dbReference type="OMA" id="KITYSWG"/>
<dbReference type="OrthoDB" id="205198at2759"/>
<dbReference type="PAN-GO" id="Q96MG7">
    <property type="GO annotations" value="2 GO annotations based on evolutionary models"/>
</dbReference>
<dbReference type="PhylomeDB" id="Q96MG7"/>
<dbReference type="TreeFam" id="TF328505"/>
<dbReference type="PathwayCommons" id="Q96MG7"/>
<dbReference type="Reactome" id="R-HSA-3108214">
    <property type="pathway name" value="SUMOylation of DNA damage response and repair proteins"/>
</dbReference>
<dbReference type="SignaLink" id="Q96MG7"/>
<dbReference type="SIGNOR" id="Q96MG7"/>
<dbReference type="BioGRID-ORCS" id="56160">
    <property type="hits" value="652 hits in 1160 CRISPR screens"/>
</dbReference>
<dbReference type="CD-CODE" id="91857CE7">
    <property type="entry name" value="Nucleolus"/>
</dbReference>
<dbReference type="GenomeRNAi" id="56160"/>
<dbReference type="Pharos" id="Q96MG7">
    <property type="development level" value="Tbio"/>
</dbReference>
<dbReference type="PRO" id="PR:Q96MG7"/>
<dbReference type="Proteomes" id="UP000005640">
    <property type="component" value="Chromosome 15"/>
</dbReference>
<dbReference type="RNAct" id="Q96MG7">
    <property type="molecule type" value="protein"/>
</dbReference>
<dbReference type="Bgee" id="ENSG00000185115">
    <property type="expression patterns" value="Expressed in islet of Langerhans and 100 other cell types or tissues"/>
</dbReference>
<dbReference type="GO" id="GO:0000781">
    <property type="term" value="C:chromosome, telomeric region"/>
    <property type="evidence" value="ECO:0000303"/>
    <property type="project" value="ComplexPortal"/>
</dbReference>
<dbReference type="GO" id="GO:0005737">
    <property type="term" value="C:cytoplasm"/>
    <property type="evidence" value="ECO:0007669"/>
    <property type="project" value="UniProtKB-SubCell"/>
</dbReference>
<dbReference type="GO" id="GO:0005654">
    <property type="term" value="C:nucleoplasm"/>
    <property type="evidence" value="ECO:0000304"/>
    <property type="project" value="Reactome"/>
</dbReference>
<dbReference type="GO" id="GO:0005634">
    <property type="term" value="C:nucleus"/>
    <property type="evidence" value="ECO:0000318"/>
    <property type="project" value="GO_Central"/>
</dbReference>
<dbReference type="GO" id="GO:0030915">
    <property type="term" value="C:Smc5-Smc6 complex"/>
    <property type="evidence" value="ECO:0000314"/>
    <property type="project" value="UniProtKB"/>
</dbReference>
<dbReference type="GO" id="GO:0046983">
    <property type="term" value="F:protein dimerization activity"/>
    <property type="evidence" value="ECO:0000314"/>
    <property type="project" value="UniProtKB"/>
</dbReference>
<dbReference type="GO" id="GO:0072711">
    <property type="term" value="P:cellular response to hydroxyurea"/>
    <property type="evidence" value="ECO:0000315"/>
    <property type="project" value="UniProtKB"/>
</dbReference>
<dbReference type="GO" id="GO:0071478">
    <property type="term" value="P:cellular response to radiation"/>
    <property type="evidence" value="ECO:0000315"/>
    <property type="project" value="UniProtKB"/>
</dbReference>
<dbReference type="GO" id="GO:0034644">
    <property type="term" value="P:cellular response to UV"/>
    <property type="evidence" value="ECO:0000315"/>
    <property type="project" value="UniProtKB"/>
</dbReference>
<dbReference type="GO" id="GO:0140588">
    <property type="term" value="P:chromatin looping"/>
    <property type="evidence" value="ECO:0000303"/>
    <property type="project" value="ComplexPortal"/>
</dbReference>
<dbReference type="GO" id="GO:0006281">
    <property type="term" value="P:DNA repair"/>
    <property type="evidence" value="ECO:0000315"/>
    <property type="project" value="UniProtKB"/>
</dbReference>
<dbReference type="GO" id="GO:0000724">
    <property type="term" value="P:double-strand break repair via homologous recombination"/>
    <property type="evidence" value="ECO:0000303"/>
    <property type="project" value="ComplexPortal"/>
</dbReference>
<dbReference type="GO" id="GO:0000122">
    <property type="term" value="P:negative regulation of transcription by RNA polymerase II"/>
    <property type="evidence" value="ECO:0000318"/>
    <property type="project" value="GO_Central"/>
</dbReference>
<dbReference type="GO" id="GO:0031398">
    <property type="term" value="P:positive regulation of protein ubiquitination"/>
    <property type="evidence" value="ECO:0000314"/>
    <property type="project" value="UniProtKB"/>
</dbReference>
<dbReference type="GO" id="GO:0016925">
    <property type="term" value="P:protein sumoylation"/>
    <property type="evidence" value="ECO:0000303"/>
    <property type="project" value="ComplexPortal"/>
</dbReference>
<dbReference type="GO" id="GO:0032204">
    <property type="term" value="P:regulation of telomere maintenance"/>
    <property type="evidence" value="ECO:0000303"/>
    <property type="project" value="ComplexPortal"/>
</dbReference>
<dbReference type="FunFam" id="1.10.10.1200:FF:000003">
    <property type="entry name" value="MAGE family member F1"/>
    <property type="match status" value="1"/>
</dbReference>
<dbReference type="FunFam" id="1.10.10.1210:FF:000001">
    <property type="entry name" value="melanoma-associated antigen D1"/>
    <property type="match status" value="1"/>
</dbReference>
<dbReference type="Gene3D" id="1.10.10.1200">
    <property type="entry name" value="MAGE homology domain, winged helix WH1 motif"/>
    <property type="match status" value="1"/>
</dbReference>
<dbReference type="Gene3D" id="1.10.10.1210">
    <property type="entry name" value="MAGE homology domain, winged helix WH2 motif"/>
    <property type="match status" value="1"/>
</dbReference>
<dbReference type="InterPro" id="IPR037445">
    <property type="entry name" value="MAGE"/>
</dbReference>
<dbReference type="InterPro" id="IPR041898">
    <property type="entry name" value="MAGE_WH1"/>
</dbReference>
<dbReference type="InterPro" id="IPR041899">
    <property type="entry name" value="MAGE_WH2"/>
</dbReference>
<dbReference type="InterPro" id="IPR002190">
    <property type="entry name" value="MHD_dom"/>
</dbReference>
<dbReference type="PANTHER" id="PTHR11736">
    <property type="entry name" value="MELANOMA-ASSOCIATED ANTIGEN MAGE ANTIGEN"/>
    <property type="match status" value="1"/>
</dbReference>
<dbReference type="PANTHER" id="PTHR11736:SF163">
    <property type="entry name" value="NON-STRUCTURAL MAINTENANCE OF CHROMOSOMES ELEMENT 3 HOMOLOG"/>
    <property type="match status" value="1"/>
</dbReference>
<dbReference type="Pfam" id="PF01454">
    <property type="entry name" value="MAGE"/>
    <property type="match status" value="1"/>
</dbReference>
<dbReference type="SMART" id="SM01373">
    <property type="entry name" value="MAGE"/>
    <property type="match status" value="1"/>
</dbReference>
<dbReference type="PROSITE" id="PS50838">
    <property type="entry name" value="MAGE"/>
    <property type="match status" value="1"/>
</dbReference>
<gene>
    <name evidence="12" type="primary">NSMCE3</name>
    <name type="synonym">HCA4</name>
    <name type="synonym">MAGEG1</name>
    <name type="synonym">NDNL2</name>
</gene>
<sequence length="304" mass="34308">MLQKPRNRGRSGGQAERDRDWSHSGNPGASRAGEDARVLRDGFAEEAPSTSRGPGGSQGSQGPSPQGARRAQAAPAVGPRSQKQLELKVSELVQFLLIKDQKKIPIKRADILKHVIGDYKDIFPDLFKRAAERLQYVFGYKLVELEPKSNTYILINTLEPVEEDAEMRGDQGTPTTGLLMIVLGLIFMKGNTIKETEAWDFLRRLGVYPTKKHLIFGDPKKLITEDFVRQRYLEYRRIPHTDPVDYEFQWGPRTNLETSKMKVLKFVAKVHNQDPKDWPAQYCEALADEENRARPQPSGPAPSS</sequence>
<feature type="chain" id="PRO_0000156733" description="Non-structural maintenance of chromosomes element 3 homolog">
    <location>
        <begin position="1"/>
        <end position="304"/>
    </location>
</feature>
<feature type="domain" description="MAGE" evidence="3">
    <location>
        <begin position="85"/>
        <end position="285"/>
    </location>
</feature>
<feature type="region of interest" description="Disordered" evidence="4">
    <location>
        <begin position="1"/>
        <end position="82"/>
    </location>
</feature>
<feature type="region of interest" description="Interaction with NSMCE1">
    <location>
        <begin position="78"/>
        <end position="304"/>
    </location>
</feature>
<feature type="region of interest" description="Disordered" evidence="4">
    <location>
        <begin position="285"/>
        <end position="304"/>
    </location>
</feature>
<feature type="compositionally biased region" description="Basic and acidic residues" evidence="4">
    <location>
        <begin position="32"/>
        <end position="43"/>
    </location>
</feature>
<feature type="compositionally biased region" description="Low complexity" evidence="4">
    <location>
        <begin position="60"/>
        <end position="80"/>
    </location>
</feature>
<feature type="modified residue" description="Phosphoserine" evidence="13 14">
    <location>
        <position position="57"/>
    </location>
</feature>
<feature type="modified residue" description="Phosphoserine" evidence="14">
    <location>
        <position position="60"/>
    </location>
</feature>
<feature type="modified residue" description="Phosphoserine" evidence="13 14 15">
    <location>
        <position position="64"/>
    </location>
</feature>
<feature type="sequence variant" id="VAR_078021" description="In LICS; creates novel endoproteolytic cleavage sites compared to wild-type; loss of interaction with NSMCE4; loss of interaction with NSMCE1; dbSNP:rs886037827." evidence="9">
    <original>P</original>
    <variation>L</variation>
    <location>
        <position position="209"/>
    </location>
</feature>
<feature type="sequence variant" id="VAR_078022" description="In LICS; no loss of protein stability; loss of interaction with NSMCE4; decreased interaction with NSMCE1; decreased association with the SMC5-SMC6 complex; decreased DNA repair; dbSNP:rs199905054." evidence="9">
    <original>L</original>
    <variation>F</variation>
    <location>
        <position position="264"/>
    </location>
</feature>
<feature type="mutagenesis site" description="Decreases interaction with NSMCE1, no effect on interaction with NSMCE4A, abolishes in vitro promotion of NSMCE1 ubiquitin ligase activity." evidence="7">
    <original>LL</original>
    <variation>AA</variation>
    <location>
        <begin position="96"/>
        <end position="97"/>
    </location>
</feature>
<feature type="mutagenesis site" description="Abolishes interaction with EID3." evidence="8">
    <original>M</original>
    <variation>A</variation>
    <location>
        <position position="180"/>
    </location>
</feature>
<feature type="mutagenesis site" description="Abolishes interaction with EID3." evidence="8">
    <original>I</original>
    <variation>A</variation>
    <location>
        <position position="181"/>
    </location>
</feature>
<feature type="mutagenesis site" description="Abolishes interaction with EID3." evidence="8">
    <original>L</original>
    <variation>A</variation>
    <location>
        <position position="185"/>
    </location>
</feature>
<feature type="mutagenesis site" description="Abolishes interaction with EID3." evidence="8">
    <original>F</original>
    <variation>A</variation>
    <location>
        <position position="266"/>
    </location>
</feature>
<feature type="mutagenesis site" description="Abolishes interaction with EID3." evidence="8">
    <original>V</original>
    <variation>A</variation>
    <location>
        <position position="270"/>
    </location>
</feature>
<feature type="helix" evidence="17">
    <location>
        <begin position="82"/>
        <end position="102"/>
    </location>
</feature>
<feature type="helix" evidence="17">
    <location>
        <begin position="108"/>
        <end position="114"/>
    </location>
</feature>
<feature type="helix" evidence="17">
    <location>
        <begin position="117"/>
        <end position="122"/>
    </location>
</feature>
<feature type="helix" evidence="17">
    <location>
        <begin position="123"/>
        <end position="138"/>
    </location>
</feature>
<feature type="strand" evidence="17">
    <location>
        <begin position="140"/>
        <end position="146"/>
    </location>
</feature>
<feature type="strand" evidence="17">
    <location>
        <begin position="150"/>
        <end position="156"/>
    </location>
</feature>
<feature type="turn" evidence="16">
    <location>
        <begin position="166"/>
        <end position="169"/>
    </location>
</feature>
<feature type="helix" evidence="17">
    <location>
        <begin position="174"/>
        <end position="188"/>
    </location>
</feature>
<feature type="turn" evidence="17">
    <location>
        <begin position="189"/>
        <end position="191"/>
    </location>
</feature>
<feature type="helix" evidence="17">
    <location>
        <begin position="195"/>
        <end position="204"/>
    </location>
</feature>
<feature type="helix" evidence="17">
    <location>
        <begin position="220"/>
        <end position="230"/>
    </location>
</feature>
<feature type="strand" evidence="16">
    <location>
        <begin position="232"/>
        <end position="236"/>
    </location>
</feature>
<feature type="strand" evidence="16">
    <location>
        <begin position="247"/>
        <end position="249"/>
    </location>
</feature>
<feature type="helix" evidence="17">
    <location>
        <begin position="252"/>
        <end position="255"/>
    </location>
</feature>
<feature type="helix" evidence="17">
    <location>
        <begin position="260"/>
        <end position="271"/>
    </location>
</feature>
<feature type="strand" evidence="17">
    <location>
        <begin position="275"/>
        <end position="277"/>
    </location>
</feature>
<feature type="helix" evidence="17">
    <location>
        <begin position="278"/>
        <end position="293"/>
    </location>
</feature>
<reference key="1">
    <citation type="submission" date="2002-03" db="EMBL/GenBank/DDBJ databases">
        <title>Identification of genes in the chromosome X that are differentially expressed in hepatocellular carcinoma.</title>
        <authorList>
            <person name="Dong X.-Y."/>
            <person name="Chen W.-F."/>
        </authorList>
    </citation>
    <scope>NUCLEOTIDE SEQUENCE [MRNA]</scope>
</reference>
<reference key="2">
    <citation type="journal article" date="2004" name="Nat. Genet.">
        <title>Complete sequencing and characterization of 21,243 full-length human cDNAs.</title>
        <authorList>
            <person name="Ota T."/>
            <person name="Suzuki Y."/>
            <person name="Nishikawa T."/>
            <person name="Otsuki T."/>
            <person name="Sugiyama T."/>
            <person name="Irie R."/>
            <person name="Wakamatsu A."/>
            <person name="Hayashi K."/>
            <person name="Sato H."/>
            <person name="Nagai K."/>
            <person name="Kimura K."/>
            <person name="Makita H."/>
            <person name="Sekine M."/>
            <person name="Obayashi M."/>
            <person name="Nishi T."/>
            <person name="Shibahara T."/>
            <person name="Tanaka T."/>
            <person name="Ishii S."/>
            <person name="Yamamoto J."/>
            <person name="Saito K."/>
            <person name="Kawai Y."/>
            <person name="Isono Y."/>
            <person name="Nakamura Y."/>
            <person name="Nagahari K."/>
            <person name="Murakami K."/>
            <person name="Yasuda T."/>
            <person name="Iwayanagi T."/>
            <person name="Wagatsuma M."/>
            <person name="Shiratori A."/>
            <person name="Sudo H."/>
            <person name="Hosoiri T."/>
            <person name="Kaku Y."/>
            <person name="Kodaira H."/>
            <person name="Kondo H."/>
            <person name="Sugawara M."/>
            <person name="Takahashi M."/>
            <person name="Kanda K."/>
            <person name="Yokoi T."/>
            <person name="Furuya T."/>
            <person name="Kikkawa E."/>
            <person name="Omura Y."/>
            <person name="Abe K."/>
            <person name="Kamihara K."/>
            <person name="Katsuta N."/>
            <person name="Sato K."/>
            <person name="Tanikawa M."/>
            <person name="Yamazaki M."/>
            <person name="Ninomiya K."/>
            <person name="Ishibashi T."/>
            <person name="Yamashita H."/>
            <person name="Murakawa K."/>
            <person name="Fujimori K."/>
            <person name="Tanai H."/>
            <person name="Kimata M."/>
            <person name="Watanabe M."/>
            <person name="Hiraoka S."/>
            <person name="Chiba Y."/>
            <person name="Ishida S."/>
            <person name="Ono Y."/>
            <person name="Takiguchi S."/>
            <person name="Watanabe S."/>
            <person name="Yosida M."/>
            <person name="Hotuta T."/>
            <person name="Kusano J."/>
            <person name="Kanehori K."/>
            <person name="Takahashi-Fujii A."/>
            <person name="Hara H."/>
            <person name="Tanase T.-O."/>
            <person name="Nomura Y."/>
            <person name="Togiya S."/>
            <person name="Komai F."/>
            <person name="Hara R."/>
            <person name="Takeuchi K."/>
            <person name="Arita M."/>
            <person name="Imose N."/>
            <person name="Musashino K."/>
            <person name="Yuuki H."/>
            <person name="Oshima A."/>
            <person name="Sasaki N."/>
            <person name="Aotsuka S."/>
            <person name="Yoshikawa Y."/>
            <person name="Matsunawa H."/>
            <person name="Ichihara T."/>
            <person name="Shiohata N."/>
            <person name="Sano S."/>
            <person name="Moriya S."/>
            <person name="Momiyama H."/>
            <person name="Satoh N."/>
            <person name="Takami S."/>
            <person name="Terashima Y."/>
            <person name="Suzuki O."/>
            <person name="Nakagawa S."/>
            <person name="Senoh A."/>
            <person name="Mizoguchi H."/>
            <person name="Goto Y."/>
            <person name="Shimizu F."/>
            <person name="Wakebe H."/>
            <person name="Hishigaki H."/>
            <person name="Watanabe T."/>
            <person name="Sugiyama A."/>
            <person name="Takemoto M."/>
            <person name="Kawakami B."/>
            <person name="Yamazaki M."/>
            <person name="Watanabe K."/>
            <person name="Kumagai A."/>
            <person name="Itakura S."/>
            <person name="Fukuzumi Y."/>
            <person name="Fujimori Y."/>
            <person name="Komiyama M."/>
            <person name="Tashiro H."/>
            <person name="Tanigami A."/>
            <person name="Fujiwara T."/>
            <person name="Ono T."/>
            <person name="Yamada K."/>
            <person name="Fujii Y."/>
            <person name="Ozaki K."/>
            <person name="Hirao M."/>
            <person name="Ohmori Y."/>
            <person name="Kawabata A."/>
            <person name="Hikiji T."/>
            <person name="Kobatake N."/>
            <person name="Inagaki H."/>
            <person name="Ikema Y."/>
            <person name="Okamoto S."/>
            <person name="Okitani R."/>
            <person name="Kawakami T."/>
            <person name="Noguchi S."/>
            <person name="Itoh T."/>
            <person name="Shigeta K."/>
            <person name="Senba T."/>
            <person name="Matsumura K."/>
            <person name="Nakajima Y."/>
            <person name="Mizuno T."/>
            <person name="Morinaga M."/>
            <person name="Sasaki M."/>
            <person name="Togashi T."/>
            <person name="Oyama M."/>
            <person name="Hata H."/>
            <person name="Watanabe M."/>
            <person name="Komatsu T."/>
            <person name="Mizushima-Sugano J."/>
            <person name="Satoh T."/>
            <person name="Shirai Y."/>
            <person name="Takahashi Y."/>
            <person name="Nakagawa K."/>
            <person name="Okumura K."/>
            <person name="Nagase T."/>
            <person name="Nomura N."/>
            <person name="Kikuchi H."/>
            <person name="Masuho Y."/>
            <person name="Yamashita R."/>
            <person name="Nakai K."/>
            <person name="Yada T."/>
            <person name="Nakamura Y."/>
            <person name="Ohara O."/>
            <person name="Isogai T."/>
            <person name="Sugano S."/>
        </authorList>
    </citation>
    <scope>NUCLEOTIDE SEQUENCE [LARGE SCALE MRNA]</scope>
    <source>
        <tissue>Skeletal muscle</tissue>
    </source>
</reference>
<reference key="3">
    <citation type="journal article" date="2004" name="Genome Res.">
        <title>The status, quality, and expansion of the NIH full-length cDNA project: the Mammalian Gene Collection (MGC).</title>
        <authorList>
            <consortium name="The MGC Project Team"/>
        </authorList>
    </citation>
    <scope>NUCLEOTIDE SEQUENCE [LARGE SCALE MRNA]</scope>
    <source>
        <tissue>Brain</tissue>
        <tissue>Lung</tissue>
        <tissue>Spleen</tissue>
        <tissue>Testis</tissue>
    </source>
</reference>
<reference key="4">
    <citation type="submission" date="2002-01" db="EMBL/GenBank/DDBJ databases">
        <title>The nucleotide sequence of a long cDNA clone isolated from human spleen.</title>
        <authorList>
            <person name="Jikuya H."/>
            <person name="Takano J."/>
            <person name="Nomura N."/>
            <person name="Kikuno R."/>
            <person name="Nagase T."/>
            <person name="Ohara O."/>
        </authorList>
    </citation>
    <scope>NUCLEOTIDE SEQUENCE [LARGE SCALE MRNA] OF 85-304</scope>
    <source>
        <tissue>Spleen</tissue>
    </source>
</reference>
<reference key="5">
    <citation type="submission" date="2000-10" db="EMBL/GenBank/DDBJ databases">
        <title>Identification of new genes of the MAGE family.</title>
        <authorList>
            <person name="Lucas S."/>
            <person name="Boon T."/>
        </authorList>
    </citation>
    <scope>NUCLEOTIDE SEQUENCE [GENOMIC DNA] OF 189-288</scope>
    <source>
        <tissue>Testis</tissue>
    </source>
</reference>
<reference key="6">
    <citation type="journal article" date="2001" name="BMC Genet.">
        <title>A necdin/MAGE-like gene in the chromosome 15 autism susceptibility region: expression, imprinting, and mapping of the human and mouse orthologues.</title>
        <authorList>
            <person name="Chibuk T.K."/>
            <person name="Bischof J.M."/>
            <person name="Wevrick R."/>
        </authorList>
    </citation>
    <scope>TISSUE SPECIFICITY</scope>
</reference>
<reference key="7">
    <citation type="journal article" date="2008" name="Mol. Cell. Biol.">
        <title>Identification of the proteins, including MAGEG1, that make up the human SMC5-6 protein complex.</title>
        <authorList>
            <person name="Taylor E.M."/>
            <person name="Copsey A.C."/>
            <person name="Hudson J.J."/>
            <person name="Vidot S."/>
            <person name="Lehmann A.R."/>
        </authorList>
    </citation>
    <scope>SUBCELLULAR LOCATION</scope>
    <scope>INTERACTION WITH NSMCE1 AND SMC6</scope>
    <scope>IDENTIFICATION IN THE SMC5-SMC6 COMPLEX</scope>
</reference>
<reference key="8">
    <citation type="journal article" date="2008" name="Proc. Natl. Acad. Sci. U.S.A.">
        <title>A quantitative atlas of mitotic phosphorylation.</title>
        <authorList>
            <person name="Dephoure N."/>
            <person name="Zhou C."/>
            <person name="Villen J."/>
            <person name="Beausoleil S.A."/>
            <person name="Bakalarski C.E."/>
            <person name="Elledge S.J."/>
            <person name="Gygi S.P."/>
        </authorList>
    </citation>
    <scope>PHOSPHORYLATION [LARGE SCALE ANALYSIS] AT SER-57 AND SER-64</scope>
    <scope>IDENTIFICATION BY MASS SPECTROMETRY [LARGE SCALE ANALYSIS]</scope>
    <source>
        <tissue>Cervix carcinoma</tissue>
    </source>
</reference>
<reference key="9">
    <citation type="journal article" date="2009" name="Anal. Chem.">
        <title>Lys-N and trypsin cover complementary parts of the phosphoproteome in a refined SCX-based approach.</title>
        <authorList>
            <person name="Gauci S."/>
            <person name="Helbig A.O."/>
            <person name="Slijper M."/>
            <person name="Krijgsveld J."/>
            <person name="Heck A.J."/>
            <person name="Mohammed S."/>
        </authorList>
    </citation>
    <scope>IDENTIFICATION BY MASS SPECTROMETRY [LARGE SCALE ANALYSIS]</scope>
</reference>
<reference key="10">
    <citation type="journal article" date="2011" name="BMC Syst. Biol.">
        <title>Initial characterization of the human central proteome.</title>
        <authorList>
            <person name="Burkard T.R."/>
            <person name="Planyavsky M."/>
            <person name="Kaupe I."/>
            <person name="Breitwieser F.P."/>
            <person name="Buerckstuemmer T."/>
            <person name="Bennett K.L."/>
            <person name="Superti-Furga G."/>
            <person name="Colinge J."/>
        </authorList>
    </citation>
    <scope>IDENTIFICATION BY MASS SPECTROMETRY [LARGE SCALE ANALYSIS]</scope>
</reference>
<reference key="11">
    <citation type="journal article" date="2011" name="PLoS ONE">
        <title>Interactions between the Nse3 and Nse4 components of the SMC5-6 complex identify evolutionarily conserved interactions between MAGE and EID Families.</title>
        <authorList>
            <person name="Hudson J.J."/>
            <person name="Bednarova K."/>
            <person name="Kozakova L."/>
            <person name="Liao C."/>
            <person name="Guerineau M."/>
            <person name="Colnaghi R."/>
            <person name="Vidot S."/>
            <person name="Marek J."/>
            <person name="Bathula S.R."/>
            <person name="Lehmann A.R."/>
            <person name="Palecek J."/>
        </authorList>
    </citation>
    <scope>INTERACTION WITH EID3 AND NSMCE1</scope>
    <scope>MUTAGENESIS OF MET-180; ILE-181; LEU-185; PHE-266 AND VAL-270</scope>
</reference>
<reference key="12">
    <citation type="journal article" date="2011" name="Sci. Signal.">
        <title>System-wide temporal characterization of the proteome and phosphoproteome of human embryonic stem cell differentiation.</title>
        <authorList>
            <person name="Rigbolt K.T."/>
            <person name="Prokhorova T.A."/>
            <person name="Akimov V."/>
            <person name="Henningsen J."/>
            <person name="Johansen P.T."/>
            <person name="Kratchmarova I."/>
            <person name="Kassem M."/>
            <person name="Mann M."/>
            <person name="Olsen J.V."/>
            <person name="Blagoev B."/>
        </authorList>
    </citation>
    <scope>IDENTIFICATION BY MASS SPECTROMETRY [LARGE SCALE ANALYSIS]</scope>
</reference>
<reference key="13">
    <citation type="journal article" date="2013" name="J. Proteome Res.">
        <title>Toward a comprehensive characterization of a human cancer cell phosphoproteome.</title>
        <authorList>
            <person name="Zhou H."/>
            <person name="Di Palma S."/>
            <person name="Preisinger C."/>
            <person name="Peng M."/>
            <person name="Polat A.N."/>
            <person name="Heck A.J."/>
            <person name="Mohammed S."/>
        </authorList>
    </citation>
    <scope>PHOSPHORYLATION [LARGE SCALE ANALYSIS] AT SER-57; SER-60 AND SER-64</scope>
    <scope>IDENTIFICATION BY MASS SPECTROMETRY [LARGE SCALE ANALYSIS]</scope>
    <source>
        <tissue>Cervix carcinoma</tissue>
        <tissue>Erythroleukemia</tissue>
    </source>
</reference>
<reference key="14">
    <citation type="journal article" date="2014" name="J. Proteomics">
        <title>An enzyme assisted RP-RPLC approach for in-depth analysis of human liver phosphoproteome.</title>
        <authorList>
            <person name="Bian Y."/>
            <person name="Song C."/>
            <person name="Cheng K."/>
            <person name="Dong M."/>
            <person name="Wang F."/>
            <person name="Huang J."/>
            <person name="Sun D."/>
            <person name="Wang L."/>
            <person name="Ye M."/>
            <person name="Zou H."/>
        </authorList>
    </citation>
    <scope>PHOSPHORYLATION [LARGE SCALE ANALYSIS] AT SER-64</scope>
    <scope>IDENTIFICATION BY MASS SPECTROMETRY [LARGE SCALE ANALYSIS]</scope>
    <source>
        <tissue>Liver</tissue>
    </source>
</reference>
<reference key="15">
    <citation type="journal article" date="2010" name="Mol. Cell">
        <title>MAGE-RING protein complexes comprise a family of E3 ubiquitin ligases.</title>
        <authorList>
            <person name="Doyle J.M."/>
            <person name="Gao J."/>
            <person name="Wang J."/>
            <person name="Yang M."/>
            <person name="Potts P.R."/>
        </authorList>
    </citation>
    <scope>X-RAY CRYSTALLOGRAPHY (2.92 ANGSTROMS) OF 78-294 IN COMPLEX WITH NSMCE1</scope>
    <scope>FUNCTION</scope>
    <scope>INTERACTION WITH NSMCE1; NSMCE4A AND PJA1</scope>
    <scope>MUTAGENESIS OF 96-LEU-LEU-97</scope>
</reference>
<reference key="16">
    <citation type="journal article" date="2016" name="J. Clin. Invest.">
        <title>Destabilized SMC5/6 complex leads to chromosome breakage syndrome with severe lung disease.</title>
        <authorList>
            <person name="van der Crabben S.N."/>
            <person name="Hennus M.P."/>
            <person name="McGregor G.A."/>
            <person name="Ritter D.I."/>
            <person name="Nagamani S.C."/>
            <person name="Wells O.S."/>
            <person name="Harakalova M."/>
            <person name="Chinn I.K."/>
            <person name="Alt A."/>
            <person name="Vondrova L."/>
            <person name="Hochstenbach R."/>
            <person name="van Montfrans J.M."/>
            <person name="Terheggen-Lagro S.W."/>
            <person name="van Lieshout S."/>
            <person name="van Roosmalen M.J."/>
            <person name="Renkens I."/>
            <person name="Duran K."/>
            <person name="Nijman I.J."/>
            <person name="Kloosterman W.P."/>
            <person name="Hennekam E."/>
            <person name="Orange J.S."/>
            <person name="van Hasselt P.M."/>
            <person name="Wheeler D.A."/>
            <person name="Palecek J.J."/>
            <person name="Lehmann A.R."/>
            <person name="Oliver A.W."/>
            <person name="Pearl L.H."/>
            <person name="Plon S.E."/>
            <person name="Murray J.M."/>
            <person name="van Haaften G."/>
        </authorList>
    </citation>
    <scope>VARIANTS LICS LEU-209 AND PHE-264</scope>
    <scope>CHARACTERIZATION OF VARIANTS LICS LEU-209 AND PHE-264</scope>
    <scope>INVOLVEMENT IN LICS</scope>
    <scope>FUNCTION</scope>
    <scope>SUBUNIT</scope>
    <scope>INTERACTION WITH NSMCE1 AND NSMCE4</scope>
</reference>
<proteinExistence type="evidence at protein level"/>
<organism>
    <name type="scientific">Homo sapiens</name>
    <name type="common">Human</name>
    <dbReference type="NCBI Taxonomy" id="9606"/>
    <lineage>
        <taxon>Eukaryota</taxon>
        <taxon>Metazoa</taxon>
        <taxon>Chordata</taxon>
        <taxon>Craniata</taxon>
        <taxon>Vertebrata</taxon>
        <taxon>Euteleostomi</taxon>
        <taxon>Mammalia</taxon>
        <taxon>Eutheria</taxon>
        <taxon>Euarchontoglires</taxon>
        <taxon>Primates</taxon>
        <taxon>Haplorrhini</taxon>
        <taxon>Catarrhini</taxon>
        <taxon>Hominidae</taxon>
        <taxon>Homo</taxon>
    </lineage>
</organism>